<sequence>GGPAAYSTYTNTADFGAVGATLESTSKGLGGLNTITQFSKAVDSPTSSVRISNSRVSNDYGSLGYGALPAPAGLAYGAAGASYGASLHGAGAYGVVRAAPAIAAAPALAYGARAIAAPAIAAPALAYGARAIAAPALAYGRGLAYGGAYGAALAAPALAYGARAYAAPALALGARAYAAPAIAAAPALAYGARAYAAPAI</sequence>
<keyword id="KW-0193">Cuticle</keyword>
<keyword id="KW-0903">Direct protein sequencing</keyword>
<keyword id="KW-0677">Repeat</keyword>
<name>CU213_LOCMI</name>
<reference evidence="3" key="1">
    <citation type="journal article" date="2000" name="Insect Biochem. Mol. Biol.">
        <title>Studies on proteins in post-ecdysial nymphal cuticle of locust, Locusta migratoria, and cockroach, Blaberus craniifer.</title>
        <authorList>
            <person name="Andersen S.O."/>
        </authorList>
    </citation>
    <scope>PROTEIN SEQUENCE</scope>
    <scope>MASS SPECTROMETRY</scope>
    <source>
        <tissue evidence="2">Fifth instar larvae cuticle</tissue>
    </source>
</reference>
<proteinExistence type="evidence at protein level"/>
<feature type="chain" id="PRO_0000252037" description="Cuticle protein 21.3">
    <location>
        <begin position="1"/>
        <end position="200"/>
    </location>
</feature>
<feature type="repeat" description="1" evidence="1">
    <location>
        <begin position="98"/>
        <end position="101"/>
    </location>
</feature>
<feature type="repeat" description="2" evidence="1">
    <location>
        <begin position="104"/>
        <end position="107"/>
    </location>
</feature>
<feature type="repeat" description="3" evidence="1">
    <location>
        <begin position="116"/>
        <end position="119"/>
    </location>
</feature>
<feature type="repeat" description="4" evidence="1">
    <location>
        <begin position="121"/>
        <end position="124"/>
    </location>
</feature>
<feature type="repeat" description="5" evidence="1">
    <location>
        <begin position="133"/>
        <end position="136"/>
    </location>
</feature>
<feature type="repeat" description="6" evidence="1">
    <location>
        <begin position="154"/>
        <end position="157"/>
    </location>
</feature>
<feature type="repeat" description="7" evidence="1">
    <location>
        <begin position="166"/>
        <end position="169"/>
    </location>
</feature>
<feature type="repeat" description="8" evidence="1">
    <location>
        <begin position="178"/>
        <end position="181"/>
    </location>
</feature>
<feature type="repeat" description="9" evidence="1">
    <location>
        <begin position="184"/>
        <end position="187"/>
    </location>
</feature>
<feature type="repeat" description="10" evidence="1">
    <location>
        <begin position="196"/>
        <end position="199"/>
    </location>
</feature>
<organism>
    <name type="scientific">Locusta migratoria</name>
    <name type="common">Migratory locust</name>
    <dbReference type="NCBI Taxonomy" id="7004"/>
    <lineage>
        <taxon>Eukaryota</taxon>
        <taxon>Metazoa</taxon>
        <taxon>Ecdysozoa</taxon>
        <taxon>Arthropoda</taxon>
        <taxon>Hexapoda</taxon>
        <taxon>Insecta</taxon>
        <taxon>Pterygota</taxon>
        <taxon>Neoptera</taxon>
        <taxon>Polyneoptera</taxon>
        <taxon>Orthoptera</taxon>
        <taxon>Caelifera</taxon>
        <taxon>Acrididea</taxon>
        <taxon>Acridomorpha</taxon>
        <taxon>Acridoidea</taxon>
        <taxon>Acrididae</taxon>
        <taxon>Oedipodinae</taxon>
        <taxon>Locusta</taxon>
    </lineage>
</organism>
<protein>
    <recommendedName>
        <fullName>Cuticle protein 21.3</fullName>
    </recommendedName>
    <alternativeName>
        <fullName>LmNCP21.3</fullName>
    </alternativeName>
</protein>
<evidence type="ECO:0000255" key="1"/>
<evidence type="ECO:0000269" key="2">
    <source>
    </source>
</evidence>
<evidence type="ECO:0000305" key="3"/>
<dbReference type="GO" id="GO:0042302">
    <property type="term" value="F:structural constituent of cuticle"/>
    <property type="evidence" value="ECO:0007669"/>
    <property type="project" value="UniProtKB-KW"/>
</dbReference>
<dbReference type="InterPro" id="IPR022727">
    <property type="entry name" value="Cuticle_C1"/>
</dbReference>
<dbReference type="PANTHER" id="PTHR39068:SF4">
    <property type="entry name" value="AGAP000382-PA"/>
    <property type="match status" value="1"/>
</dbReference>
<dbReference type="PANTHER" id="PTHR39068">
    <property type="entry name" value="LARVAL/PUPAL CUTICLE PROTEIN H1C-LIKE PROTEIN-RELATED"/>
    <property type="match status" value="1"/>
</dbReference>
<dbReference type="Pfam" id="PF11018">
    <property type="entry name" value="Cuticle_3"/>
    <property type="match status" value="1"/>
</dbReference>
<accession>P82167</accession>
<comment type="function">
    <text evidence="3">Component of the cuticle of migratory locust which contains more than 100 different structural proteins.</text>
</comment>
<comment type="domain">
    <text evidence="3">The tetrapeptide (A-A-P-[AV]) repeats found throughout the protein are also present in many proteins constituting the protective envelope of other species.</text>
</comment>
<comment type="mass spectrometry"/>